<name>METE_KLEP3</name>
<accession>B5XYJ1</accession>
<keyword id="KW-0028">Amino-acid biosynthesis</keyword>
<keyword id="KW-0479">Metal-binding</keyword>
<keyword id="KW-0486">Methionine biosynthesis</keyword>
<keyword id="KW-0489">Methyltransferase</keyword>
<keyword id="KW-0677">Repeat</keyword>
<keyword id="KW-0808">Transferase</keyword>
<keyword id="KW-0862">Zinc</keyword>
<evidence type="ECO:0000255" key="1">
    <source>
        <dbReference type="HAMAP-Rule" id="MF_00172"/>
    </source>
</evidence>
<organism>
    <name type="scientific">Klebsiella pneumoniae (strain 342)</name>
    <dbReference type="NCBI Taxonomy" id="507522"/>
    <lineage>
        <taxon>Bacteria</taxon>
        <taxon>Pseudomonadati</taxon>
        <taxon>Pseudomonadota</taxon>
        <taxon>Gammaproteobacteria</taxon>
        <taxon>Enterobacterales</taxon>
        <taxon>Enterobacteriaceae</taxon>
        <taxon>Klebsiella/Raoultella group</taxon>
        <taxon>Klebsiella</taxon>
        <taxon>Klebsiella pneumoniae complex</taxon>
    </lineage>
</organism>
<gene>
    <name evidence="1" type="primary">metE</name>
    <name type="ordered locus">KPK_5354</name>
</gene>
<comment type="function">
    <text evidence="1">Catalyzes the transfer of a methyl group from 5-methyltetrahydrofolate to homocysteine resulting in methionine formation.</text>
</comment>
<comment type="catalytic activity">
    <reaction evidence="1">
        <text>5-methyltetrahydropteroyltri-L-glutamate + L-homocysteine = tetrahydropteroyltri-L-glutamate + L-methionine</text>
        <dbReference type="Rhea" id="RHEA:21196"/>
        <dbReference type="ChEBI" id="CHEBI:57844"/>
        <dbReference type="ChEBI" id="CHEBI:58140"/>
        <dbReference type="ChEBI" id="CHEBI:58199"/>
        <dbReference type="ChEBI" id="CHEBI:58207"/>
        <dbReference type="EC" id="2.1.1.14"/>
    </reaction>
</comment>
<comment type="cofactor">
    <cofactor evidence="1">
        <name>Zn(2+)</name>
        <dbReference type="ChEBI" id="CHEBI:29105"/>
    </cofactor>
    <text evidence="1">Binds 1 zinc ion per subunit.</text>
</comment>
<comment type="pathway">
    <text evidence="1">Amino-acid biosynthesis; L-methionine biosynthesis via de novo pathway; L-methionine from L-homocysteine (MetE route): step 1/1.</text>
</comment>
<comment type="similarity">
    <text evidence="1">Belongs to the vitamin-B12 independent methionine synthase family.</text>
</comment>
<feature type="chain" id="PRO_1000097831" description="5-methyltetrahydropteroyltriglutamate--homocysteine methyltransferase">
    <location>
        <begin position="1"/>
        <end position="753"/>
    </location>
</feature>
<feature type="active site" description="Proton donor" evidence="1">
    <location>
        <position position="694"/>
    </location>
</feature>
<feature type="binding site" evidence="1">
    <location>
        <begin position="17"/>
        <end position="20"/>
    </location>
    <ligand>
        <name>5-methyltetrahydropteroyltri-L-glutamate</name>
        <dbReference type="ChEBI" id="CHEBI:58207"/>
    </ligand>
</feature>
<feature type="binding site" evidence="1">
    <location>
        <position position="117"/>
    </location>
    <ligand>
        <name>5-methyltetrahydropteroyltri-L-glutamate</name>
        <dbReference type="ChEBI" id="CHEBI:58207"/>
    </ligand>
</feature>
<feature type="binding site" evidence="1">
    <location>
        <begin position="431"/>
        <end position="433"/>
    </location>
    <ligand>
        <name>L-homocysteine</name>
        <dbReference type="ChEBI" id="CHEBI:58199"/>
    </ligand>
</feature>
<feature type="binding site" evidence="1">
    <location>
        <begin position="431"/>
        <end position="433"/>
    </location>
    <ligand>
        <name>L-methionine</name>
        <dbReference type="ChEBI" id="CHEBI:57844"/>
    </ligand>
</feature>
<feature type="binding site" evidence="1">
    <location>
        <position position="484"/>
    </location>
    <ligand>
        <name>L-homocysteine</name>
        <dbReference type="ChEBI" id="CHEBI:58199"/>
    </ligand>
</feature>
<feature type="binding site" evidence="1">
    <location>
        <position position="484"/>
    </location>
    <ligand>
        <name>L-methionine</name>
        <dbReference type="ChEBI" id="CHEBI:57844"/>
    </ligand>
</feature>
<feature type="binding site" evidence="1">
    <location>
        <begin position="515"/>
        <end position="516"/>
    </location>
    <ligand>
        <name>5-methyltetrahydropteroyltri-L-glutamate</name>
        <dbReference type="ChEBI" id="CHEBI:58207"/>
    </ligand>
</feature>
<feature type="binding site" evidence="1">
    <location>
        <position position="561"/>
    </location>
    <ligand>
        <name>5-methyltetrahydropteroyltri-L-glutamate</name>
        <dbReference type="ChEBI" id="CHEBI:58207"/>
    </ligand>
</feature>
<feature type="binding site" evidence="1">
    <location>
        <position position="599"/>
    </location>
    <ligand>
        <name>L-homocysteine</name>
        <dbReference type="ChEBI" id="CHEBI:58199"/>
    </ligand>
</feature>
<feature type="binding site" evidence="1">
    <location>
        <position position="599"/>
    </location>
    <ligand>
        <name>L-methionine</name>
        <dbReference type="ChEBI" id="CHEBI:57844"/>
    </ligand>
</feature>
<feature type="binding site" evidence="1">
    <location>
        <position position="605"/>
    </location>
    <ligand>
        <name>5-methyltetrahydropteroyltri-L-glutamate</name>
        <dbReference type="ChEBI" id="CHEBI:58207"/>
    </ligand>
</feature>
<feature type="binding site" evidence="1">
    <location>
        <position position="641"/>
    </location>
    <ligand>
        <name>Zn(2+)</name>
        <dbReference type="ChEBI" id="CHEBI:29105"/>
        <note>catalytic</note>
    </ligand>
</feature>
<feature type="binding site" evidence="1">
    <location>
        <position position="643"/>
    </location>
    <ligand>
        <name>Zn(2+)</name>
        <dbReference type="ChEBI" id="CHEBI:29105"/>
        <note>catalytic</note>
    </ligand>
</feature>
<feature type="binding site" evidence="1">
    <location>
        <position position="665"/>
    </location>
    <ligand>
        <name>Zn(2+)</name>
        <dbReference type="ChEBI" id="CHEBI:29105"/>
        <note>catalytic</note>
    </ligand>
</feature>
<feature type="binding site" evidence="1">
    <location>
        <position position="726"/>
    </location>
    <ligand>
        <name>Zn(2+)</name>
        <dbReference type="ChEBI" id="CHEBI:29105"/>
        <note>catalytic</note>
    </ligand>
</feature>
<protein>
    <recommendedName>
        <fullName evidence="1">5-methyltetrahydropteroyltriglutamate--homocysteine methyltransferase</fullName>
        <ecNumber evidence="1">2.1.1.14</ecNumber>
    </recommendedName>
    <alternativeName>
        <fullName evidence="1">Cobalamin-independent methionine synthase</fullName>
    </alternativeName>
    <alternativeName>
        <fullName evidence="1">Methionine synthase, vitamin-B12 independent isozyme</fullName>
    </alternativeName>
</protein>
<reference key="1">
    <citation type="journal article" date="2008" name="PLoS Genet.">
        <title>Complete genome sequence of the N2-fixing broad host range endophyte Klebsiella pneumoniae 342 and virulence predictions verified in mice.</title>
        <authorList>
            <person name="Fouts D.E."/>
            <person name="Tyler H.L."/>
            <person name="DeBoy R.T."/>
            <person name="Daugherty S."/>
            <person name="Ren Q."/>
            <person name="Badger J.H."/>
            <person name="Durkin A.S."/>
            <person name="Huot H."/>
            <person name="Shrivastava S."/>
            <person name="Kothari S."/>
            <person name="Dodson R.J."/>
            <person name="Mohamoud Y."/>
            <person name="Khouri H."/>
            <person name="Roesch L.F.W."/>
            <person name="Krogfelt K.A."/>
            <person name="Struve C."/>
            <person name="Triplett E.W."/>
            <person name="Methe B.A."/>
        </authorList>
    </citation>
    <scope>NUCLEOTIDE SEQUENCE [LARGE SCALE GENOMIC DNA]</scope>
    <source>
        <strain>342</strain>
    </source>
</reference>
<proteinExistence type="inferred from homology"/>
<sequence>MTIINHTLGFPRVGLRRELKKAQESYWAGNATREELLTVGRELRARHWEQQKQAGVDLLPVGDFAWYDHVLTTSLLLGNVPARHQNKDGSIDIDTLFRIGRGRAPTGEPAAAAEMTKWFNTNYHYMVPEFVKGQQFKLTWTQLLDEVDEALALGHKIKPVLLGPVTYLWLGKVKGEPFDRLSLLNDILPVYQQVLAELAKRGIEWVQIDEPALVLELPPAWLEAFKPAYDALQGQVKLLLTTYFEGISDNLATIAALPVQGLHVDLVHGKDDVAELHNRLPADWLLSAGLINGRNVWRADLTEKYAQIKDLVGKRDLWVASSCSLLHSPIDLSVETRLDAEVKSWFAFALQKCGELALLRDALNSGDTAAITEWSAPIQARRHSTRVHNAEVEKRLAAITAQDSQRASPYEVRAQAQRQRFNLPKWPTTTIGSFPQTTEIRGLRLDFKKGNLDASHYRTGIAEHIKQAIVEQERLGLDVLVHGEAERNDMVEYFGEHLDGFIFTQNGWVQSYGSRCVKPPVVIGDVSRPQAITVDWAKYAQSLTDKPVKGMLTGPVTILCWSFPREDVSRETIAKQIALALRDEVADLEAAGIGIIQIDEPALREGLPLKRSDWDAYLQWGVEAFRLNAAVAKDDTQIHTHMCYCEFNDIMDSIAALDADVITIETSRSDMELLESFEAFEYPNEIGPGVYDIHSPNVPSVEWIEALLAKAAQRIPAERLWVNPDCGLKTRGWPETRAALANMVQAAQNLRQA</sequence>
<dbReference type="EC" id="2.1.1.14" evidence="1"/>
<dbReference type="EMBL" id="CP000964">
    <property type="protein sequence ID" value="ACI10333.1"/>
    <property type="molecule type" value="Genomic_DNA"/>
</dbReference>
<dbReference type="SMR" id="B5XYJ1"/>
<dbReference type="KEGG" id="kpe:KPK_5354"/>
<dbReference type="HOGENOM" id="CLU_013175_0_0_6"/>
<dbReference type="UniPathway" id="UPA00051">
    <property type="reaction ID" value="UER00082"/>
</dbReference>
<dbReference type="Proteomes" id="UP000001734">
    <property type="component" value="Chromosome"/>
</dbReference>
<dbReference type="GO" id="GO:0003871">
    <property type="term" value="F:5-methyltetrahydropteroyltriglutamate-homocysteine S-methyltransferase activity"/>
    <property type="evidence" value="ECO:0007669"/>
    <property type="project" value="UniProtKB-UniRule"/>
</dbReference>
<dbReference type="GO" id="GO:0008270">
    <property type="term" value="F:zinc ion binding"/>
    <property type="evidence" value="ECO:0007669"/>
    <property type="project" value="InterPro"/>
</dbReference>
<dbReference type="GO" id="GO:0009086">
    <property type="term" value="P:methionine biosynthetic process"/>
    <property type="evidence" value="ECO:0007669"/>
    <property type="project" value="UniProtKB-UniRule"/>
</dbReference>
<dbReference type="GO" id="GO:0032259">
    <property type="term" value="P:methylation"/>
    <property type="evidence" value="ECO:0007669"/>
    <property type="project" value="UniProtKB-KW"/>
</dbReference>
<dbReference type="CDD" id="cd03311">
    <property type="entry name" value="CIMS_C_terminal_like"/>
    <property type="match status" value="1"/>
</dbReference>
<dbReference type="CDD" id="cd03312">
    <property type="entry name" value="CIMS_N_terminal_like"/>
    <property type="match status" value="1"/>
</dbReference>
<dbReference type="FunFam" id="3.20.20.210:FF:000002">
    <property type="entry name" value="5-methyltetrahydropteroyltriglutamate--homocysteine methyltransferase"/>
    <property type="match status" value="1"/>
</dbReference>
<dbReference type="FunFam" id="3.20.20.210:FF:000003">
    <property type="entry name" value="5-methyltetrahydropteroyltriglutamate--homocysteine methyltransferase"/>
    <property type="match status" value="1"/>
</dbReference>
<dbReference type="Gene3D" id="3.20.20.210">
    <property type="match status" value="2"/>
</dbReference>
<dbReference type="HAMAP" id="MF_00172">
    <property type="entry name" value="Meth_synth"/>
    <property type="match status" value="1"/>
</dbReference>
<dbReference type="InterPro" id="IPR013215">
    <property type="entry name" value="Cbl-indep_Met_Synth_N"/>
</dbReference>
<dbReference type="InterPro" id="IPR006276">
    <property type="entry name" value="Cobalamin-indep_Met_synthase"/>
</dbReference>
<dbReference type="InterPro" id="IPR002629">
    <property type="entry name" value="Met_Synth_C/arc"/>
</dbReference>
<dbReference type="InterPro" id="IPR038071">
    <property type="entry name" value="UROD/MetE-like_sf"/>
</dbReference>
<dbReference type="NCBIfam" id="TIGR01371">
    <property type="entry name" value="met_syn_B12ind"/>
    <property type="match status" value="1"/>
</dbReference>
<dbReference type="NCBIfam" id="NF003556">
    <property type="entry name" value="PRK05222.1"/>
    <property type="match status" value="1"/>
</dbReference>
<dbReference type="PANTHER" id="PTHR30519">
    <property type="entry name" value="5-METHYLTETRAHYDROPTEROYLTRIGLUTAMATE--HOMOCYSTEINE METHYLTRANSFERASE"/>
    <property type="match status" value="1"/>
</dbReference>
<dbReference type="Pfam" id="PF08267">
    <property type="entry name" value="Meth_synt_1"/>
    <property type="match status" value="1"/>
</dbReference>
<dbReference type="Pfam" id="PF01717">
    <property type="entry name" value="Meth_synt_2"/>
    <property type="match status" value="1"/>
</dbReference>
<dbReference type="PIRSF" id="PIRSF000382">
    <property type="entry name" value="MeTrfase_B12_ind"/>
    <property type="match status" value="1"/>
</dbReference>
<dbReference type="SUPFAM" id="SSF51726">
    <property type="entry name" value="UROD/MetE-like"/>
    <property type="match status" value="2"/>
</dbReference>